<name>RS13_SACS2</name>
<comment type="function">
    <text evidence="1">Located at the top of the head of the 30S subunit, it contacts several helices of the 16S rRNA. In the 70S ribosome it contacts the 23S rRNA (bridge B1a) and protein L5 of the 50S subunit (bridge B1b), connecting the 2 subunits; these bridges are implicated in subunit movement.</text>
</comment>
<comment type="subunit">
    <text evidence="1">Part of the 30S ribosomal subunit. Forms a loose heterodimer with protein S19. Forms two bridges to the 50S subunit in the 70S ribosome.</text>
</comment>
<comment type="similarity">
    <text evidence="1">Belongs to the universal ribosomal protein uS13 family.</text>
</comment>
<proteinExistence type="evidence at protein level"/>
<sequence>MSQQFKYVVRIFGQDVDGTMKLPYALAMVKGIGYNTAKAIIRKLGMDPNARLGELSDAEVKKVESVISDHTIKGLPSWLYNRRKDYESGLDLHLVTSDLIFYVRNDIEREKKSRSWRGVRHSLGLKVRGQRTRTTGRTGMTIGVARKKAAQPQSQQSSSQQQKSS</sequence>
<evidence type="ECO:0000255" key="1">
    <source>
        <dbReference type="HAMAP-Rule" id="MF_01315"/>
    </source>
</evidence>
<evidence type="ECO:0000256" key="2">
    <source>
        <dbReference type="SAM" id="MobiDB-lite"/>
    </source>
</evidence>
<evidence type="ECO:0000305" key="3"/>
<protein>
    <recommendedName>
        <fullName evidence="1">Small ribosomal subunit protein uS13</fullName>
    </recommendedName>
    <alternativeName>
        <fullName evidence="3">30S ribosomal protein S13</fullName>
    </alternativeName>
</protein>
<reference key="1">
    <citation type="journal article" date="1996" name="Mol. Microbiol.">
        <title>Organizational characteristics and information content of an archaeal genome: 156 kb of sequence from Sulfolobus solfataricus P2.</title>
        <authorList>
            <person name="Sensen C.W."/>
            <person name="Klenk H.-P."/>
            <person name="Singh R.K."/>
            <person name="Allard G."/>
            <person name="Chan C.C.-Y."/>
            <person name="Liu Q.Y."/>
            <person name="Penny S.L."/>
            <person name="Young F."/>
            <person name="Schenk M.E."/>
            <person name="Gaasterland T."/>
            <person name="Doolittle W.F."/>
            <person name="Ragan M.A."/>
            <person name="Charlebois R.L."/>
        </authorList>
    </citation>
    <scope>NUCLEOTIDE SEQUENCE [GENOMIC DNA]</scope>
    <source>
        <strain>ATCC 35092 / DSM 1617 / JCM 11322 / P2</strain>
    </source>
</reference>
<reference key="2">
    <citation type="journal article" date="2001" name="Proc. Natl. Acad. Sci. U.S.A.">
        <title>The complete genome of the crenarchaeon Sulfolobus solfataricus P2.</title>
        <authorList>
            <person name="She Q."/>
            <person name="Singh R.K."/>
            <person name="Confalonieri F."/>
            <person name="Zivanovic Y."/>
            <person name="Allard G."/>
            <person name="Awayez M.J."/>
            <person name="Chan-Weiher C.C.-Y."/>
            <person name="Clausen I.G."/>
            <person name="Curtis B.A."/>
            <person name="De Moors A."/>
            <person name="Erauso G."/>
            <person name="Fletcher C."/>
            <person name="Gordon P.M.K."/>
            <person name="Heikamp-de Jong I."/>
            <person name="Jeffries A.C."/>
            <person name="Kozera C.J."/>
            <person name="Medina N."/>
            <person name="Peng X."/>
            <person name="Thi-Ngoc H.P."/>
            <person name="Redder P."/>
            <person name="Schenk M.E."/>
            <person name="Theriault C."/>
            <person name="Tolstrup N."/>
            <person name="Charlebois R.L."/>
            <person name="Doolittle W.F."/>
            <person name="Duguet M."/>
            <person name="Gaasterland T."/>
            <person name="Garrett R.A."/>
            <person name="Ragan M.A."/>
            <person name="Sensen C.W."/>
            <person name="Van der Oost J."/>
        </authorList>
    </citation>
    <scope>NUCLEOTIDE SEQUENCE [LARGE SCALE GENOMIC DNA]</scope>
    <source>
        <strain>ATCC 35092 / DSM 1617 / JCM 11322 / P2</strain>
    </source>
</reference>
<keyword id="KW-0002">3D-structure</keyword>
<keyword id="KW-1185">Reference proteome</keyword>
<keyword id="KW-0687">Ribonucleoprotein</keyword>
<keyword id="KW-0689">Ribosomal protein</keyword>
<keyword id="KW-0694">RNA-binding</keyword>
<keyword id="KW-0699">rRNA-binding</keyword>
<organism>
    <name type="scientific">Saccharolobus solfataricus (strain ATCC 35092 / DSM 1617 / JCM 11322 / P2)</name>
    <name type="common">Sulfolobus solfataricus</name>
    <dbReference type="NCBI Taxonomy" id="273057"/>
    <lineage>
        <taxon>Archaea</taxon>
        <taxon>Thermoproteota</taxon>
        <taxon>Thermoprotei</taxon>
        <taxon>Sulfolobales</taxon>
        <taxon>Sulfolobaceae</taxon>
        <taxon>Saccharolobus</taxon>
    </lineage>
</organism>
<dbReference type="EMBL" id="Y08257">
    <property type="protein sequence ID" value="CAA69528.1"/>
    <property type="molecule type" value="Genomic_DNA"/>
</dbReference>
<dbReference type="EMBL" id="AE006641">
    <property type="protein sequence ID" value="AAK40436.1"/>
    <property type="molecule type" value="Genomic_DNA"/>
</dbReference>
<dbReference type="PIR" id="S75414">
    <property type="entry name" value="S75414"/>
</dbReference>
<dbReference type="RefSeq" id="WP_009988886.1">
    <property type="nucleotide sequence ID" value="NC_002754.1"/>
</dbReference>
<dbReference type="PDB" id="9FHL">
    <property type="method" value="EM"/>
    <property type="resolution" value="2.50 A"/>
    <property type="chains" value="O=1-165"/>
</dbReference>
<dbReference type="PDB" id="9FRA">
    <property type="method" value="EM"/>
    <property type="resolution" value="2.80 A"/>
    <property type="chains" value="O=1-165"/>
</dbReference>
<dbReference type="PDB" id="9FRK">
    <property type="method" value="EM"/>
    <property type="resolution" value="3.00 A"/>
    <property type="chains" value="O=1-165"/>
</dbReference>
<dbReference type="PDB" id="9FRL">
    <property type="method" value="EM"/>
    <property type="resolution" value="2.97 A"/>
    <property type="chains" value="O=1-165"/>
</dbReference>
<dbReference type="PDB" id="9FS6">
    <property type="method" value="EM"/>
    <property type="resolution" value="2.90 A"/>
    <property type="chains" value="O=1-165"/>
</dbReference>
<dbReference type="PDB" id="9FS8">
    <property type="method" value="EM"/>
    <property type="resolution" value="3.70 A"/>
    <property type="chains" value="O=1-165"/>
</dbReference>
<dbReference type="PDB" id="9FSF">
    <property type="method" value="EM"/>
    <property type="resolution" value="2.80 A"/>
    <property type="chains" value="O=1-165"/>
</dbReference>
<dbReference type="PDB" id="9FY0">
    <property type="method" value="EM"/>
    <property type="resolution" value="2.90 A"/>
    <property type="chains" value="O=1-165"/>
</dbReference>
<dbReference type="PDBsum" id="9FHL"/>
<dbReference type="PDBsum" id="9FRA"/>
<dbReference type="PDBsum" id="9FRK"/>
<dbReference type="PDBsum" id="9FRL"/>
<dbReference type="PDBsum" id="9FS6"/>
<dbReference type="PDBsum" id="9FS8"/>
<dbReference type="PDBsum" id="9FSF"/>
<dbReference type="PDBsum" id="9FY0"/>
<dbReference type="EMDB" id="EMD-50445"/>
<dbReference type="EMDB" id="EMD-50709"/>
<dbReference type="EMDB" id="EMD-50716"/>
<dbReference type="EMDB" id="EMD-50717"/>
<dbReference type="EMDB" id="EMD-50724"/>
<dbReference type="EMDB" id="EMD-50725"/>
<dbReference type="EMDB" id="EMD-50727"/>
<dbReference type="EMDB" id="EMD-50854"/>
<dbReference type="SMR" id="P95986"/>
<dbReference type="FunCoup" id="P95986">
    <property type="interactions" value="272"/>
</dbReference>
<dbReference type="STRING" id="273057.SSO0074"/>
<dbReference type="PaxDb" id="273057-SSO0074"/>
<dbReference type="EnsemblBacteria" id="AAK40436">
    <property type="protein sequence ID" value="AAK40436"/>
    <property type="gene ID" value="SSO0074"/>
</dbReference>
<dbReference type="KEGG" id="sso:SSO0074"/>
<dbReference type="PATRIC" id="fig|273057.12.peg.75"/>
<dbReference type="eggNOG" id="arCOG01722">
    <property type="taxonomic scope" value="Archaea"/>
</dbReference>
<dbReference type="HOGENOM" id="CLU_103849_0_0_2"/>
<dbReference type="InParanoid" id="P95986"/>
<dbReference type="PhylomeDB" id="P95986"/>
<dbReference type="Proteomes" id="UP000001974">
    <property type="component" value="Chromosome"/>
</dbReference>
<dbReference type="GO" id="GO:0005829">
    <property type="term" value="C:cytosol"/>
    <property type="evidence" value="ECO:0000318"/>
    <property type="project" value="GO_Central"/>
</dbReference>
<dbReference type="GO" id="GO:0015935">
    <property type="term" value="C:small ribosomal subunit"/>
    <property type="evidence" value="ECO:0000318"/>
    <property type="project" value="GO_Central"/>
</dbReference>
<dbReference type="GO" id="GO:0019843">
    <property type="term" value="F:rRNA binding"/>
    <property type="evidence" value="ECO:0007669"/>
    <property type="project" value="UniProtKB-UniRule"/>
</dbReference>
<dbReference type="GO" id="GO:0003735">
    <property type="term" value="F:structural constituent of ribosome"/>
    <property type="evidence" value="ECO:0007669"/>
    <property type="project" value="InterPro"/>
</dbReference>
<dbReference type="GO" id="GO:0006412">
    <property type="term" value="P:translation"/>
    <property type="evidence" value="ECO:0007669"/>
    <property type="project" value="UniProtKB-UniRule"/>
</dbReference>
<dbReference type="FunFam" id="1.10.8.50:FF:000001">
    <property type="entry name" value="30S ribosomal protein S13"/>
    <property type="match status" value="1"/>
</dbReference>
<dbReference type="FunFam" id="4.10.910.10:FF:000002">
    <property type="entry name" value="40S ribosomal protein S18"/>
    <property type="match status" value="1"/>
</dbReference>
<dbReference type="Gene3D" id="1.10.8.50">
    <property type="match status" value="1"/>
</dbReference>
<dbReference type="Gene3D" id="4.10.910.10">
    <property type="entry name" value="30s ribosomal protein s13, domain 2"/>
    <property type="match status" value="1"/>
</dbReference>
<dbReference type="HAMAP" id="MF_01315">
    <property type="entry name" value="Ribosomal_uS13"/>
    <property type="match status" value="1"/>
</dbReference>
<dbReference type="InterPro" id="IPR027437">
    <property type="entry name" value="Rbsml_uS13_C"/>
</dbReference>
<dbReference type="InterPro" id="IPR001892">
    <property type="entry name" value="Ribosomal_uS13"/>
</dbReference>
<dbReference type="InterPro" id="IPR010979">
    <property type="entry name" value="Ribosomal_uS13-like_H2TH"/>
</dbReference>
<dbReference type="InterPro" id="IPR019977">
    <property type="entry name" value="Ribosomal_uS13_archaeal"/>
</dbReference>
<dbReference type="InterPro" id="IPR018269">
    <property type="entry name" value="Ribosomal_uS13_CS"/>
</dbReference>
<dbReference type="NCBIfam" id="NF003140">
    <property type="entry name" value="PRK04053.1"/>
    <property type="match status" value="1"/>
</dbReference>
<dbReference type="NCBIfam" id="TIGR03629">
    <property type="entry name" value="uS13_arch"/>
    <property type="match status" value="1"/>
</dbReference>
<dbReference type="PANTHER" id="PTHR10871">
    <property type="entry name" value="30S RIBOSOMAL PROTEIN S13/40S RIBOSOMAL PROTEIN S18"/>
    <property type="match status" value="1"/>
</dbReference>
<dbReference type="PANTHER" id="PTHR10871:SF3">
    <property type="entry name" value="SMALL RIBOSOMAL SUBUNIT PROTEIN US13"/>
    <property type="match status" value="1"/>
</dbReference>
<dbReference type="Pfam" id="PF00416">
    <property type="entry name" value="Ribosomal_S13"/>
    <property type="match status" value="1"/>
</dbReference>
<dbReference type="PIRSF" id="PIRSF002134">
    <property type="entry name" value="Ribosomal_S13"/>
    <property type="match status" value="1"/>
</dbReference>
<dbReference type="SUPFAM" id="SSF46946">
    <property type="entry name" value="S13-like H2TH domain"/>
    <property type="match status" value="1"/>
</dbReference>
<dbReference type="PROSITE" id="PS00646">
    <property type="entry name" value="RIBOSOMAL_S13_1"/>
    <property type="match status" value="1"/>
</dbReference>
<dbReference type="PROSITE" id="PS50159">
    <property type="entry name" value="RIBOSOMAL_S13_2"/>
    <property type="match status" value="1"/>
</dbReference>
<gene>
    <name evidence="1" type="primary">rps13</name>
    <name evidence="1" type="synonym">rps13Ab</name>
    <name type="ordered locus">SSO0074</name>
    <name type="ORF">C04_048</name>
</gene>
<accession>P95986</accession>
<feature type="chain" id="PRO_0000132191" description="Small ribosomal subunit protein uS13">
    <location>
        <begin position="1"/>
        <end position="165"/>
    </location>
</feature>
<feature type="region of interest" description="Disordered" evidence="2">
    <location>
        <begin position="139"/>
        <end position="165"/>
    </location>
</feature>
<feature type="compositionally biased region" description="Low complexity" evidence="2">
    <location>
        <begin position="153"/>
        <end position="165"/>
    </location>
</feature>